<evidence type="ECO:0000250" key="1"/>
<evidence type="ECO:0000256" key="2">
    <source>
        <dbReference type="SAM" id="MobiDB-lite"/>
    </source>
</evidence>
<evidence type="ECO:0000269" key="3">
    <source>
    </source>
</evidence>
<evidence type="ECO:0000269" key="4">
    <source>
    </source>
</evidence>
<evidence type="ECO:0000269" key="5">
    <source>
    </source>
</evidence>
<evidence type="ECO:0000303" key="6">
    <source>
    </source>
</evidence>
<evidence type="ECO:0000305" key="7"/>
<protein>
    <recommendedName>
        <fullName>Calcium-binding tyrosine phosphorylation-regulated protein</fullName>
    </recommendedName>
    <alternativeName>
        <fullName>Calcium-binding protein 86</fullName>
    </alternativeName>
    <alternativeName>
        <fullName>Testis-specific calcium-binding protein CBP86</fullName>
    </alternativeName>
</protein>
<organism>
    <name type="scientific">Mus musculus</name>
    <name type="common">Mouse</name>
    <dbReference type="NCBI Taxonomy" id="10090"/>
    <lineage>
        <taxon>Eukaryota</taxon>
        <taxon>Metazoa</taxon>
        <taxon>Chordata</taxon>
        <taxon>Craniata</taxon>
        <taxon>Vertebrata</taxon>
        <taxon>Euteleostomi</taxon>
        <taxon>Mammalia</taxon>
        <taxon>Eutheria</taxon>
        <taxon>Euarchontoglires</taxon>
        <taxon>Glires</taxon>
        <taxon>Rodentia</taxon>
        <taxon>Myomorpha</taxon>
        <taxon>Muroidea</taxon>
        <taxon>Muridae</taxon>
        <taxon>Murinae</taxon>
        <taxon>Mus</taxon>
        <taxon>Mus</taxon>
    </lineage>
</organism>
<name>CABYR_MOUSE</name>
<keyword id="KW-0025">Alternative splicing</keyword>
<keyword id="KW-0106">Calcium</keyword>
<keyword id="KW-0966">Cell projection</keyword>
<keyword id="KW-0969">Cilium</keyword>
<keyword id="KW-0963">Cytoplasm</keyword>
<keyword id="KW-0206">Cytoskeleton</keyword>
<keyword id="KW-0282">Flagellum</keyword>
<keyword id="KW-0479">Metal-binding</keyword>
<keyword id="KW-0597">Phosphoprotein</keyword>
<keyword id="KW-1185">Reference proteome</keyword>
<proteinExistence type="evidence at protein level"/>
<feature type="chain" id="PRO_0000089270" description="Calcium-binding tyrosine phosphorylation-regulated protein">
    <location>
        <begin position="1"/>
        <end position="453"/>
    </location>
</feature>
<feature type="domain" description="RIIa">
    <location>
        <begin position="12"/>
        <end position="49"/>
    </location>
</feature>
<feature type="region of interest" description="Disordered" evidence="2">
    <location>
        <begin position="86"/>
        <end position="165"/>
    </location>
</feature>
<feature type="region of interest" description="Disordered" evidence="2">
    <location>
        <begin position="246"/>
        <end position="278"/>
    </location>
</feature>
<feature type="region of interest" description="Disordered" evidence="2">
    <location>
        <begin position="406"/>
        <end position="453"/>
    </location>
</feature>
<feature type="compositionally biased region" description="Low complexity" evidence="2">
    <location>
        <begin position="143"/>
        <end position="154"/>
    </location>
</feature>
<feature type="splice variant" id="VSP_016252" description="In isoform 2." evidence="6">
    <original>GNVPSTYSEVLMVDVATSTPAVPQDVLSAEFAEEVVLSAPLVCSGETVEVQVVSKTSAQVVVGPVSEAEPPKASSAPLQGEQEPPAHEAPDTQVTSASRISSIYNDVPVNEGVVYVEEIPGYIVIPFTDHDQVACVKEIEQSPPGSPKAVEPKTKISIESLKTVQVEENSQHKSSVHVEAEATVLLSNTALDGQPEVPA</original>
    <variation>ALATSEAGQPPPYSNMWTLYCLTDMNQQSRPSPPPAPGPFPQATLYLPNPKEPQFLQNPPKVTSPTYVMMDDSKKTNAPPFILVGSNVQEAQDWNPLPGHAVVSQAEALKRYAAVQVPIAVPADQTFQRPAPNPQNASPPTSGQDGPRPKSPVFLSVAFPVEDVAKKSSGSGDKRTPFGSYGIAGEITVTTAHVRRAEP</variation>
    <location>
        <begin position="183"/>
        <end position="381"/>
    </location>
</feature>
<feature type="splice variant" id="VSP_016253" description="In isoform 3." evidence="6">
    <original>GNVPSTYSEVLMVDVATSTPAVPQDVLSAEFAEEVVLS</original>
    <variation>EDVAKKSSGSGDKRTPFGSYGIAGEITVTTAHVRRAEP</variation>
    <location>
        <begin position="183"/>
        <end position="220"/>
    </location>
</feature>
<feature type="splice variant" id="VSP_016254" description="In isoform 3." evidence="6">
    <location>
        <begin position="221"/>
        <end position="453"/>
    </location>
</feature>
<feature type="splice variant" id="VSP_016255" description="In isoform 2." evidence="6">
    <location>
        <begin position="382"/>
        <end position="453"/>
    </location>
</feature>
<feature type="sequence conflict" description="In Ref. 1; AAK49988." evidence="7" ref="1">
    <original>L</original>
    <variation>P</variation>
    <location>
        <position position="17"/>
    </location>
</feature>
<feature type="sequence conflict" description="In Ref. 1; AAK49988." evidence="7" ref="1">
    <original>F</original>
    <variation>L</variation>
    <location>
        <position position="41"/>
    </location>
</feature>
<sequence length="453" mass="48333">MISSKPRLVVPYGLKTLLEGVSRAILKTNPTNITQFAAVYFKELIVFREGNSSLDIKDLIKQFHQMKVEKWAEGVTVEKKECIKEPIKPPPVPCKPTHMEKSTDTEEDNVAGPLFSNKTTQFPSVHAEVQSEETSEGARGPSDKPTTPKTDYTPPSSPPPAPVSAEYAYVPADPAQFAAQMLGNVPSTYSEVLMVDVATSTPAVPQDVLSAEFAEEVVLSAPLVCSGETVEVQVVSKTSAQVVVGPVSEAEPPKASSAPLQGEQEPPAHEAPDTQVTSASRISSIYNDVPVNEGVVYVEEIPGYIVIPFTDHDQVACVKEIEQSPPGSPKAVEPKTKISIESLKTVQVEENSQHKSSVHVEAEATVLLSNTALDGQPEVPAEPLDAEGFFKVASENSLHLETEIVIINPDDPGQEESGGNAAPHSSGDPFPPAPGGLTEPEMQPDGEAAPEQV</sequence>
<reference key="1">
    <citation type="journal article" date="2003" name="Gene">
        <title>Splicing in murine CABYR and its genomic structure.</title>
        <authorList>
            <person name="Sen B."/>
            <person name="Mandal A."/>
            <person name="Wolkowicz M.J."/>
            <person name="Kim Y.-H."/>
            <person name="Reddi P.P."/>
            <person name="Shetty J."/>
            <person name="Bush L.A."/>
            <person name="Flickinger C.J."/>
            <person name="Herr J.C."/>
        </authorList>
    </citation>
    <scope>NUCLEOTIDE SEQUENCE [MRNA] (ISOFORMS 1; 2 AND 3)</scope>
    <scope>SUBCELLULAR LOCATION</scope>
    <scope>TISSUE SPECIFICITY</scope>
    <source>
        <tissue>Testis</tissue>
    </source>
</reference>
<reference key="2">
    <citation type="journal article" date="2005" name="Science">
        <title>The transcriptional landscape of the mammalian genome.</title>
        <authorList>
            <person name="Carninci P."/>
            <person name="Kasukawa T."/>
            <person name="Katayama S."/>
            <person name="Gough J."/>
            <person name="Frith M.C."/>
            <person name="Maeda N."/>
            <person name="Oyama R."/>
            <person name="Ravasi T."/>
            <person name="Lenhard B."/>
            <person name="Wells C."/>
            <person name="Kodzius R."/>
            <person name="Shimokawa K."/>
            <person name="Bajic V.B."/>
            <person name="Brenner S.E."/>
            <person name="Batalov S."/>
            <person name="Forrest A.R."/>
            <person name="Zavolan M."/>
            <person name="Davis M.J."/>
            <person name="Wilming L.G."/>
            <person name="Aidinis V."/>
            <person name="Allen J.E."/>
            <person name="Ambesi-Impiombato A."/>
            <person name="Apweiler R."/>
            <person name="Aturaliya R.N."/>
            <person name="Bailey T.L."/>
            <person name="Bansal M."/>
            <person name="Baxter L."/>
            <person name="Beisel K.W."/>
            <person name="Bersano T."/>
            <person name="Bono H."/>
            <person name="Chalk A.M."/>
            <person name="Chiu K.P."/>
            <person name="Choudhary V."/>
            <person name="Christoffels A."/>
            <person name="Clutterbuck D.R."/>
            <person name="Crowe M.L."/>
            <person name="Dalla E."/>
            <person name="Dalrymple B.P."/>
            <person name="de Bono B."/>
            <person name="Della Gatta G."/>
            <person name="di Bernardo D."/>
            <person name="Down T."/>
            <person name="Engstrom P."/>
            <person name="Fagiolini M."/>
            <person name="Faulkner G."/>
            <person name="Fletcher C.F."/>
            <person name="Fukushima T."/>
            <person name="Furuno M."/>
            <person name="Futaki S."/>
            <person name="Gariboldi M."/>
            <person name="Georgii-Hemming P."/>
            <person name="Gingeras T.R."/>
            <person name="Gojobori T."/>
            <person name="Green R.E."/>
            <person name="Gustincich S."/>
            <person name="Harbers M."/>
            <person name="Hayashi Y."/>
            <person name="Hensch T.K."/>
            <person name="Hirokawa N."/>
            <person name="Hill D."/>
            <person name="Huminiecki L."/>
            <person name="Iacono M."/>
            <person name="Ikeo K."/>
            <person name="Iwama A."/>
            <person name="Ishikawa T."/>
            <person name="Jakt M."/>
            <person name="Kanapin A."/>
            <person name="Katoh M."/>
            <person name="Kawasawa Y."/>
            <person name="Kelso J."/>
            <person name="Kitamura H."/>
            <person name="Kitano H."/>
            <person name="Kollias G."/>
            <person name="Krishnan S.P."/>
            <person name="Kruger A."/>
            <person name="Kummerfeld S.K."/>
            <person name="Kurochkin I.V."/>
            <person name="Lareau L.F."/>
            <person name="Lazarevic D."/>
            <person name="Lipovich L."/>
            <person name="Liu J."/>
            <person name="Liuni S."/>
            <person name="McWilliam S."/>
            <person name="Madan Babu M."/>
            <person name="Madera M."/>
            <person name="Marchionni L."/>
            <person name="Matsuda H."/>
            <person name="Matsuzawa S."/>
            <person name="Miki H."/>
            <person name="Mignone F."/>
            <person name="Miyake S."/>
            <person name="Morris K."/>
            <person name="Mottagui-Tabar S."/>
            <person name="Mulder N."/>
            <person name="Nakano N."/>
            <person name="Nakauchi H."/>
            <person name="Ng P."/>
            <person name="Nilsson R."/>
            <person name="Nishiguchi S."/>
            <person name="Nishikawa S."/>
            <person name="Nori F."/>
            <person name="Ohara O."/>
            <person name="Okazaki Y."/>
            <person name="Orlando V."/>
            <person name="Pang K.C."/>
            <person name="Pavan W.J."/>
            <person name="Pavesi G."/>
            <person name="Pesole G."/>
            <person name="Petrovsky N."/>
            <person name="Piazza S."/>
            <person name="Reed J."/>
            <person name="Reid J.F."/>
            <person name="Ring B.Z."/>
            <person name="Ringwald M."/>
            <person name="Rost B."/>
            <person name="Ruan Y."/>
            <person name="Salzberg S.L."/>
            <person name="Sandelin A."/>
            <person name="Schneider C."/>
            <person name="Schoenbach C."/>
            <person name="Sekiguchi K."/>
            <person name="Semple C.A."/>
            <person name="Seno S."/>
            <person name="Sessa L."/>
            <person name="Sheng Y."/>
            <person name="Shibata Y."/>
            <person name="Shimada H."/>
            <person name="Shimada K."/>
            <person name="Silva D."/>
            <person name="Sinclair B."/>
            <person name="Sperling S."/>
            <person name="Stupka E."/>
            <person name="Sugiura K."/>
            <person name="Sultana R."/>
            <person name="Takenaka Y."/>
            <person name="Taki K."/>
            <person name="Tammoja K."/>
            <person name="Tan S.L."/>
            <person name="Tang S."/>
            <person name="Taylor M.S."/>
            <person name="Tegner J."/>
            <person name="Teichmann S.A."/>
            <person name="Ueda H.R."/>
            <person name="van Nimwegen E."/>
            <person name="Verardo R."/>
            <person name="Wei C.L."/>
            <person name="Yagi K."/>
            <person name="Yamanishi H."/>
            <person name="Zabarovsky E."/>
            <person name="Zhu S."/>
            <person name="Zimmer A."/>
            <person name="Hide W."/>
            <person name="Bult C."/>
            <person name="Grimmond S.M."/>
            <person name="Teasdale R.D."/>
            <person name="Liu E.T."/>
            <person name="Brusic V."/>
            <person name="Quackenbush J."/>
            <person name="Wahlestedt C."/>
            <person name="Mattick J.S."/>
            <person name="Hume D.A."/>
            <person name="Kai C."/>
            <person name="Sasaki D."/>
            <person name="Tomaru Y."/>
            <person name="Fukuda S."/>
            <person name="Kanamori-Katayama M."/>
            <person name="Suzuki M."/>
            <person name="Aoki J."/>
            <person name="Arakawa T."/>
            <person name="Iida J."/>
            <person name="Imamura K."/>
            <person name="Itoh M."/>
            <person name="Kato T."/>
            <person name="Kawaji H."/>
            <person name="Kawagashira N."/>
            <person name="Kawashima T."/>
            <person name="Kojima M."/>
            <person name="Kondo S."/>
            <person name="Konno H."/>
            <person name="Nakano K."/>
            <person name="Ninomiya N."/>
            <person name="Nishio T."/>
            <person name="Okada M."/>
            <person name="Plessy C."/>
            <person name="Shibata K."/>
            <person name="Shiraki T."/>
            <person name="Suzuki S."/>
            <person name="Tagami M."/>
            <person name="Waki K."/>
            <person name="Watahiki A."/>
            <person name="Okamura-Oho Y."/>
            <person name="Suzuki H."/>
            <person name="Kawai J."/>
            <person name="Hayashizaki Y."/>
        </authorList>
    </citation>
    <scope>NUCLEOTIDE SEQUENCE [LARGE SCALE MRNA] (ISOFORM 1)</scope>
    <source>
        <strain>C57BL/6J</strain>
        <tissue>Testis</tissue>
    </source>
</reference>
<reference key="3">
    <citation type="journal article" date="2007" name="J. Biol. Chem.">
        <title>FSCB, a novel protein kinase A-phosphorylated calcium-binding protein, is a CABYR-binding partner involved in late steps of fibrous sheath biogenesis.</title>
        <authorList>
            <person name="Li Y.-F."/>
            <person name="He W."/>
            <person name="Jha K.N."/>
            <person name="Klotz K."/>
            <person name="Kim Y.-H."/>
            <person name="Mandal A."/>
            <person name="Pulido S."/>
            <person name="Digilio L."/>
            <person name="Flickinger C.J."/>
            <person name="Herr J.C."/>
        </authorList>
    </citation>
    <scope>INTERACTION WITH FSCB</scope>
</reference>
<reference key="4">
    <citation type="journal article" date="2010" name="Cell">
        <title>A tissue-specific atlas of mouse protein phosphorylation and expression.</title>
        <authorList>
            <person name="Huttlin E.L."/>
            <person name="Jedrychowski M.P."/>
            <person name="Elias J.E."/>
            <person name="Goswami T."/>
            <person name="Rad R."/>
            <person name="Beausoleil S.A."/>
            <person name="Villen J."/>
            <person name="Haas W."/>
            <person name="Sowa M.E."/>
            <person name="Gygi S.P."/>
        </authorList>
    </citation>
    <scope>IDENTIFICATION BY MASS SPECTROMETRY [LARGE SCALE ANALYSIS]</scope>
    <source>
        <tissue>Testis</tissue>
    </source>
</reference>
<reference key="5">
    <citation type="journal article" date="2023" name="J. Genet. Genomics">
        <title>Coiled-coil domain-containing 38 is required for acrosome biogenesis and fibrous sheath assembly in mice.</title>
        <authorList>
            <person name="Wang Y."/>
            <person name="Huang X."/>
            <person name="Sun G."/>
            <person name="Chen J."/>
            <person name="Wu B."/>
            <person name="Luo J."/>
            <person name="Tang S."/>
            <person name="Dai P."/>
            <person name="Zhang F."/>
            <person name="Li J."/>
            <person name="Wang L."/>
        </authorList>
    </citation>
    <scope>SUBCELLULAR LOCATION</scope>
</reference>
<accession>Q9D424</accession>
<accession>Q91Y41</accession>
<accession>Q91Y42</accession>
<comment type="function">
    <text evidence="1">May function as a regulator of both motility- and head-associated functions such as capacitation and the acrosome reaction. May bind calcium in vitro (By similarity).</text>
</comment>
<comment type="subunit">
    <text evidence="4">Interacts with FSCB.</text>
</comment>
<comment type="subcellular location">
    <subcellularLocation>
        <location evidence="3">Cytoplasm</location>
    </subcellularLocation>
    <subcellularLocation>
        <location evidence="3">Cytoplasm</location>
        <location evidence="3">Cytoskeleton</location>
    </subcellularLocation>
    <subcellularLocation>
        <location evidence="3 5">Cell projection</location>
        <location evidence="3 5">Cilium</location>
        <location evidence="3 5">Flagellum</location>
    </subcellularLocation>
    <text>Localizes to fibrous sheath including the surface of the longitudinal columns and ribs of the principal piece of sperm flagella.</text>
</comment>
<comment type="alternative products">
    <event type="alternative splicing"/>
    <isoform>
        <id>Q9D424-1</id>
        <name>1</name>
        <name>CBP86-1</name>
        <name>CBP86-6</name>
        <sequence type="displayed"/>
    </isoform>
    <isoform>
        <id>Q9D424-2</id>
        <name>2</name>
        <name>CBP86-2</name>
        <sequence type="described" ref="VSP_016252 VSP_016255"/>
    </isoform>
    <isoform>
        <id>Q9D424-3</id>
        <name>3</name>
        <name>CBP86-4</name>
        <sequence type="described" ref="VSP_016253 VSP_016254"/>
    </isoform>
</comment>
<comment type="tissue specificity">
    <text evidence="3">Expressed in spermatozoa.</text>
</comment>
<comment type="PTM">
    <text evidence="1">Phosphorylated on tyrosine residues during in vitro capacitation. Dephosphorylation affects its ability to bind calcium (By similarity).</text>
</comment>
<gene>
    <name type="primary">Cabyr</name>
    <name type="synonym">Cbp86</name>
</gene>
<dbReference type="EMBL" id="AF359382">
    <property type="protein sequence ID" value="AAK49987.1"/>
    <property type="molecule type" value="mRNA"/>
</dbReference>
<dbReference type="EMBL" id="AF359383">
    <property type="protein sequence ID" value="AAK49988.1"/>
    <property type="molecule type" value="mRNA"/>
</dbReference>
<dbReference type="EMBL" id="AF359384">
    <property type="protein sequence ID" value="AAK49989.1"/>
    <property type="molecule type" value="mRNA"/>
</dbReference>
<dbReference type="EMBL" id="AF359385">
    <property type="protein sequence ID" value="AAK49990.1"/>
    <property type="molecule type" value="mRNA"/>
</dbReference>
<dbReference type="EMBL" id="AK016856">
    <property type="protein sequence ID" value="BAB30467.1"/>
    <property type="molecule type" value="mRNA"/>
</dbReference>
<dbReference type="CCDS" id="CCDS37739.1">
    <molecule id="Q9D424-1"/>
</dbReference>
<dbReference type="CCDS" id="CCDS50223.1">
    <molecule id="Q9D424-2"/>
</dbReference>
<dbReference type="CCDS" id="CCDS50224.1">
    <molecule id="Q9D424-3"/>
</dbReference>
<dbReference type="RefSeq" id="NP_001035883.1">
    <molecule id="Q9D424-1"/>
    <property type="nucleotide sequence ID" value="NM_001042418.1"/>
</dbReference>
<dbReference type="RefSeq" id="NP_001035884.1">
    <molecule id="Q9D424-3"/>
    <property type="nucleotide sequence ID" value="NM_001042419.1"/>
</dbReference>
<dbReference type="RefSeq" id="NP_001035885.1">
    <molecule id="Q9D424-1"/>
    <property type="nucleotide sequence ID" value="NM_001042420.1"/>
</dbReference>
<dbReference type="RefSeq" id="NP_081963.1">
    <molecule id="Q9D424-1"/>
    <property type="nucleotide sequence ID" value="NM_027687.2"/>
</dbReference>
<dbReference type="RefSeq" id="NP_859420.2">
    <molecule id="Q9D424-2"/>
    <property type="nucleotide sequence ID" value="NM_181731.3"/>
</dbReference>
<dbReference type="RefSeq" id="XP_017173468.1">
    <molecule id="Q9D424-1"/>
    <property type="nucleotide sequence ID" value="XM_017317979.3"/>
</dbReference>
<dbReference type="RefSeq" id="XP_036017169.1">
    <molecule id="Q9D424-2"/>
    <property type="nucleotide sequence ID" value="XM_036161276.1"/>
</dbReference>
<dbReference type="SMR" id="Q9D424"/>
<dbReference type="BioGRID" id="214495">
    <property type="interactions" value="5"/>
</dbReference>
<dbReference type="FunCoup" id="Q9D424">
    <property type="interactions" value="35"/>
</dbReference>
<dbReference type="STRING" id="10090.ENSMUSP00000140870"/>
<dbReference type="GlyGen" id="Q9D424">
    <property type="glycosylation" value="1 site, 1 N-linked glycan (1 site)"/>
</dbReference>
<dbReference type="iPTMnet" id="Q9D424"/>
<dbReference type="PhosphoSitePlus" id="Q9D424"/>
<dbReference type="SwissPalm" id="Q9D424"/>
<dbReference type="PaxDb" id="10090-ENSMUSP00000111523"/>
<dbReference type="ProteomicsDB" id="273875">
    <molecule id="Q9D424-1"/>
</dbReference>
<dbReference type="ProteomicsDB" id="273876">
    <molecule id="Q9D424-2"/>
</dbReference>
<dbReference type="ProteomicsDB" id="273877">
    <molecule id="Q9D424-3"/>
</dbReference>
<dbReference type="Antibodypedia" id="22085">
    <property type="antibodies" value="94 antibodies from 24 providers"/>
</dbReference>
<dbReference type="DNASU" id="71132"/>
<dbReference type="Ensembl" id="ENSMUST00000080415.11">
    <molecule id="Q9D424-1"/>
    <property type="protein sequence ID" value="ENSMUSP00000079277.5"/>
    <property type="gene ID" value="ENSMUSG00000024430.15"/>
</dbReference>
<dbReference type="Ensembl" id="ENSMUST00000115857.9">
    <molecule id="Q9D424-1"/>
    <property type="protein sequence ID" value="ENSMUSP00000111523.3"/>
    <property type="gene ID" value="ENSMUSG00000024430.15"/>
</dbReference>
<dbReference type="Ensembl" id="ENSMUST00000119108.8">
    <molecule id="Q9D424-3"/>
    <property type="protein sequence ID" value="ENSMUSP00000113760.2"/>
    <property type="gene ID" value="ENSMUSG00000024430.15"/>
</dbReference>
<dbReference type="Ensembl" id="ENSMUST00000121018.8">
    <molecule id="Q9D424-2"/>
    <property type="protein sequence ID" value="ENSMUSP00000113131.2"/>
    <property type="gene ID" value="ENSMUSG00000024430.15"/>
</dbReference>
<dbReference type="Ensembl" id="ENSMUST00000150758.8">
    <molecule id="Q9D424-1"/>
    <property type="protein sequence ID" value="ENSMUSP00000118330.2"/>
    <property type="gene ID" value="ENSMUSG00000024430.15"/>
</dbReference>
<dbReference type="Ensembl" id="ENSMUST00000186263.2">
    <molecule id="Q9D424-1"/>
    <property type="protein sequence ID" value="ENSMUSP00000140870.2"/>
    <property type="gene ID" value="ENSMUSG00000024430.15"/>
</dbReference>
<dbReference type="Ensembl" id="ENSMUST00000191078.7">
    <molecule id="Q9D424-1"/>
    <property type="protein sequence ID" value="ENSMUSP00000140894.2"/>
    <property type="gene ID" value="ENSMUSG00000024430.15"/>
</dbReference>
<dbReference type="Ensembl" id="ENSMUST00000234735.2">
    <molecule id="Q9D424-2"/>
    <property type="protein sequence ID" value="ENSMUSP00000157280.2"/>
    <property type="gene ID" value="ENSMUSG00000024430.15"/>
</dbReference>
<dbReference type="GeneID" id="71132"/>
<dbReference type="KEGG" id="mmu:71132"/>
<dbReference type="UCSC" id="uc008ecl.1">
    <molecule id="Q9D424-3"/>
    <property type="organism name" value="mouse"/>
</dbReference>
<dbReference type="UCSC" id="uc008ecm.1">
    <molecule id="Q9D424-1"/>
    <property type="organism name" value="mouse"/>
</dbReference>
<dbReference type="AGR" id="MGI:1918382"/>
<dbReference type="CTD" id="26256"/>
<dbReference type="MGI" id="MGI:1918382">
    <property type="gene designation" value="Cabyr"/>
</dbReference>
<dbReference type="VEuPathDB" id="HostDB:ENSMUSG00000024430"/>
<dbReference type="eggNOG" id="ENOG502S1NF">
    <property type="taxonomic scope" value="Eukaryota"/>
</dbReference>
<dbReference type="GeneTree" id="ENSGT00390000000444"/>
<dbReference type="HOGENOM" id="CLU_025626_0_0_1"/>
<dbReference type="InParanoid" id="Q9D424"/>
<dbReference type="OMA" id="PYSSNMW"/>
<dbReference type="OrthoDB" id="252964at2759"/>
<dbReference type="PhylomeDB" id="Q9D424"/>
<dbReference type="TreeFam" id="TF332959"/>
<dbReference type="BioGRID-ORCS" id="71132">
    <property type="hits" value="1 hit in 79 CRISPR screens"/>
</dbReference>
<dbReference type="ChiTaRS" id="Cabyr">
    <property type="organism name" value="mouse"/>
</dbReference>
<dbReference type="PRO" id="PR:Q9D424"/>
<dbReference type="Proteomes" id="UP000000589">
    <property type="component" value="Chromosome 18"/>
</dbReference>
<dbReference type="RNAct" id="Q9D424">
    <property type="molecule type" value="protein"/>
</dbReference>
<dbReference type="Bgee" id="ENSMUSG00000024430">
    <property type="expression patterns" value="Expressed in seminiferous tubule of testis and 57 other cell types or tissues"/>
</dbReference>
<dbReference type="ExpressionAtlas" id="Q9D424">
    <property type="expression patterns" value="baseline and differential"/>
</dbReference>
<dbReference type="GO" id="GO:0005737">
    <property type="term" value="C:cytoplasm"/>
    <property type="evidence" value="ECO:0000314"/>
    <property type="project" value="BHF-UCL"/>
</dbReference>
<dbReference type="GO" id="GO:0005856">
    <property type="term" value="C:cytoskeleton"/>
    <property type="evidence" value="ECO:0007669"/>
    <property type="project" value="UniProtKB-SubCell"/>
</dbReference>
<dbReference type="GO" id="GO:0005829">
    <property type="term" value="C:cytosol"/>
    <property type="evidence" value="ECO:0007669"/>
    <property type="project" value="Ensembl"/>
</dbReference>
<dbReference type="GO" id="GO:0031514">
    <property type="term" value="C:motile cilium"/>
    <property type="evidence" value="ECO:0000314"/>
    <property type="project" value="MGI"/>
</dbReference>
<dbReference type="GO" id="GO:0005654">
    <property type="term" value="C:nucleoplasm"/>
    <property type="evidence" value="ECO:0007669"/>
    <property type="project" value="Ensembl"/>
</dbReference>
<dbReference type="GO" id="GO:0097229">
    <property type="term" value="C:sperm end piece"/>
    <property type="evidence" value="ECO:0000314"/>
    <property type="project" value="MGI"/>
</dbReference>
<dbReference type="GO" id="GO:0035686">
    <property type="term" value="C:sperm fibrous sheath"/>
    <property type="evidence" value="ECO:0000314"/>
    <property type="project" value="BHF-UCL"/>
</dbReference>
<dbReference type="GO" id="GO:0097228">
    <property type="term" value="C:sperm principal piece"/>
    <property type="evidence" value="ECO:0000314"/>
    <property type="project" value="UniProtKB"/>
</dbReference>
<dbReference type="GO" id="GO:0005509">
    <property type="term" value="F:calcium ion binding"/>
    <property type="evidence" value="ECO:0000314"/>
    <property type="project" value="MGI"/>
</dbReference>
<dbReference type="GO" id="GO:0019899">
    <property type="term" value="F:enzyme binding"/>
    <property type="evidence" value="ECO:0000250"/>
    <property type="project" value="BHF-UCL"/>
</dbReference>
<dbReference type="GO" id="GO:0019904">
    <property type="term" value="F:protein domain specific binding"/>
    <property type="evidence" value="ECO:0000353"/>
    <property type="project" value="BHF-UCL"/>
</dbReference>
<dbReference type="GO" id="GO:0019722">
    <property type="term" value="P:calcium-mediated signaling"/>
    <property type="evidence" value="ECO:0000303"/>
    <property type="project" value="BHF-UCL"/>
</dbReference>
<dbReference type="GO" id="GO:0048240">
    <property type="term" value="P:sperm capacitation"/>
    <property type="evidence" value="ECO:0000303"/>
    <property type="project" value="BHF-UCL"/>
</dbReference>
<dbReference type="CDD" id="cd12100">
    <property type="entry name" value="DD_CABYR_SP17"/>
    <property type="match status" value="1"/>
</dbReference>
<dbReference type="FunFam" id="1.20.890.10:FF:000005">
    <property type="entry name" value="calcium-binding tyrosine phosphorylation-regulated protein isoform X1"/>
    <property type="match status" value="1"/>
</dbReference>
<dbReference type="Gene3D" id="1.20.890.10">
    <property type="entry name" value="cAMP-dependent protein kinase regulatory subunit, dimerization-anchoring domain"/>
    <property type="match status" value="1"/>
</dbReference>
<dbReference type="InterPro" id="IPR038848">
    <property type="entry name" value="CABYR"/>
</dbReference>
<dbReference type="InterPro" id="IPR003117">
    <property type="entry name" value="cAMP_dep_PK_reg_su_I/II_a/b"/>
</dbReference>
<dbReference type="InterPro" id="IPR047579">
    <property type="entry name" value="DD_CABYR_SP17"/>
</dbReference>
<dbReference type="PANTHER" id="PTHR15494">
    <property type="entry name" value="CALCIUM-BINDING TYROSINE PHOSPHORYLATION-REGULATED PROTEIN"/>
    <property type="match status" value="1"/>
</dbReference>
<dbReference type="PANTHER" id="PTHR15494:SF0">
    <property type="entry name" value="CALCIUM-BINDING TYROSINE PHOSPHORYLATION-REGULATED PROTEIN"/>
    <property type="match status" value="1"/>
</dbReference>
<dbReference type="Pfam" id="PF02197">
    <property type="entry name" value="RIIa"/>
    <property type="match status" value="1"/>
</dbReference>
<dbReference type="SMART" id="SM00394">
    <property type="entry name" value="RIIa"/>
    <property type="match status" value="1"/>
</dbReference>
<dbReference type="SUPFAM" id="SSF47391">
    <property type="entry name" value="Dimerization-anchoring domain of cAMP-dependent PK regulatory subunit"/>
    <property type="match status" value="1"/>
</dbReference>